<proteinExistence type="inferred from homology"/>
<accession>Q31NV8</accession>
<gene>
    <name evidence="1" type="primary">petA</name>
    <name type="ordered locus">Synpcc7942_1231</name>
</gene>
<protein>
    <recommendedName>
        <fullName evidence="1">Cytochrome f</fullName>
    </recommendedName>
</protein>
<reference key="1">
    <citation type="submission" date="2005-08" db="EMBL/GenBank/DDBJ databases">
        <title>Complete sequence of chromosome 1 of Synechococcus elongatus PCC 7942.</title>
        <authorList>
            <consortium name="US DOE Joint Genome Institute"/>
            <person name="Copeland A."/>
            <person name="Lucas S."/>
            <person name="Lapidus A."/>
            <person name="Barry K."/>
            <person name="Detter J.C."/>
            <person name="Glavina T."/>
            <person name="Hammon N."/>
            <person name="Israni S."/>
            <person name="Pitluck S."/>
            <person name="Schmutz J."/>
            <person name="Larimer F."/>
            <person name="Land M."/>
            <person name="Kyrpides N."/>
            <person name="Lykidis A."/>
            <person name="Golden S."/>
            <person name="Richardson P."/>
        </authorList>
    </citation>
    <scope>NUCLEOTIDE SEQUENCE [LARGE SCALE GENOMIC DNA]</scope>
    <source>
        <strain>ATCC 33912 / PCC 7942 / FACHB-805</strain>
    </source>
</reference>
<name>CYF_SYNE7</name>
<comment type="function">
    <text evidence="1">Component of the cytochrome b6-f complex, which mediates electron transfer between photosystem II (PSII) and photosystem I (PSI), cyclic electron flow around PSI, and state transitions.</text>
</comment>
<comment type="cofactor">
    <cofactor evidence="1">
        <name>heme</name>
        <dbReference type="ChEBI" id="CHEBI:30413"/>
    </cofactor>
    <text evidence="1">Binds 1 heme group covalently.</text>
</comment>
<comment type="subunit">
    <text evidence="1">The 4 large subunits of the cytochrome b6-f complex are cytochrome b6, subunit IV (17 kDa polypeptide, PetD), cytochrome f and the Rieske protein, while the 4 small subunits are PetG, PetL, PetM and PetN. The complex functions as a dimer.</text>
</comment>
<comment type="subcellular location">
    <subcellularLocation>
        <location evidence="1">Cellular thylakoid membrane</location>
        <topology evidence="1">Single-pass membrane protein</topology>
    </subcellularLocation>
</comment>
<comment type="similarity">
    <text evidence="1">Belongs to the cytochrome f family.</text>
</comment>
<sequence length="324" mass="34454">MNMRFSPKALVRQLGRLSLVACLSLGLLGAADWLQPQAAAAYPFWAQENYASPREATGKIVCANCHLAKKPTEVEVPHSVLPDTVFKAVVKIPYDRSSQQVLGDGSKGGLNVGAVLMLPDGFKLAPEDRISEELKEEIGNVYFTNYSADQENIILVGPLPGDDHQEIVFPVLSPDPAKDKNVFFGKYQIHVGGNRGRGQVYPTGQKSNNGVYTASAAGVIDAVTETASGYDIVIRKADGSTVTDAVPAGPSPIVAVGSEVAAGAALTNDPNVGGFGQIDTEIVLQSSNRVLGVIAFFFAVMLAQIMLVLKKKQVEKVQAAELNF</sequence>
<feature type="signal peptide" evidence="1">
    <location>
        <begin position="1"/>
        <end position="30"/>
    </location>
</feature>
<feature type="chain" id="PRO_5000101090" description="Cytochrome f">
    <location>
        <begin position="31"/>
        <end position="324"/>
    </location>
</feature>
<feature type="transmembrane region" description="Helical" evidence="1">
    <location>
        <begin position="290"/>
        <end position="310"/>
    </location>
</feature>
<feature type="binding site" description="axial binding residue" evidence="1">
    <location>
        <position position="42"/>
    </location>
    <ligand>
        <name>heme</name>
        <dbReference type="ChEBI" id="CHEBI:30413"/>
    </ligand>
    <ligandPart>
        <name>Fe</name>
        <dbReference type="ChEBI" id="CHEBI:18248"/>
    </ligandPart>
</feature>
<feature type="binding site" description="covalent" evidence="1">
    <location>
        <position position="62"/>
    </location>
    <ligand>
        <name>heme</name>
        <dbReference type="ChEBI" id="CHEBI:30413"/>
    </ligand>
</feature>
<feature type="binding site" description="covalent" evidence="1">
    <location>
        <position position="65"/>
    </location>
    <ligand>
        <name>heme</name>
        <dbReference type="ChEBI" id="CHEBI:30413"/>
    </ligand>
</feature>
<feature type="binding site" description="axial binding residue" evidence="1">
    <location>
        <position position="66"/>
    </location>
    <ligand>
        <name>heme</name>
        <dbReference type="ChEBI" id="CHEBI:30413"/>
    </ligand>
    <ligandPart>
        <name>Fe</name>
        <dbReference type="ChEBI" id="CHEBI:18248"/>
    </ligandPart>
</feature>
<evidence type="ECO:0000255" key="1">
    <source>
        <dbReference type="HAMAP-Rule" id="MF_00610"/>
    </source>
</evidence>
<dbReference type="EMBL" id="CP000100">
    <property type="protein sequence ID" value="ABB57261.1"/>
    <property type="molecule type" value="Genomic_DNA"/>
</dbReference>
<dbReference type="RefSeq" id="WP_011242633.1">
    <property type="nucleotide sequence ID" value="NZ_JACJTX010000003.1"/>
</dbReference>
<dbReference type="SMR" id="Q31NV8"/>
<dbReference type="STRING" id="1140.Synpcc7942_1231"/>
<dbReference type="TCDB" id="3.D.3.5.3">
    <property type="family name" value="the proton-translocating quinol:cytochrome c reductase (qcr) superfamily"/>
</dbReference>
<dbReference type="PaxDb" id="1140-Synpcc7942_1231"/>
<dbReference type="GeneID" id="72430091"/>
<dbReference type="KEGG" id="syf:Synpcc7942_1231"/>
<dbReference type="eggNOG" id="COG0739">
    <property type="taxonomic scope" value="Bacteria"/>
</dbReference>
<dbReference type="HOGENOM" id="CLU_033498_0_0_3"/>
<dbReference type="OrthoDB" id="581091at2"/>
<dbReference type="BioCyc" id="MetaCyc:SYNPCC7942_1231-MONOMER"/>
<dbReference type="BioCyc" id="SYNEL:SYNPCC7942_1231-MONOMER"/>
<dbReference type="Proteomes" id="UP000889800">
    <property type="component" value="Chromosome"/>
</dbReference>
<dbReference type="GO" id="GO:0031676">
    <property type="term" value="C:plasma membrane-derived thylakoid membrane"/>
    <property type="evidence" value="ECO:0007669"/>
    <property type="project" value="UniProtKB-SubCell"/>
</dbReference>
<dbReference type="GO" id="GO:0009055">
    <property type="term" value="F:electron transfer activity"/>
    <property type="evidence" value="ECO:0007669"/>
    <property type="project" value="UniProtKB-UniRule"/>
</dbReference>
<dbReference type="GO" id="GO:0020037">
    <property type="term" value="F:heme binding"/>
    <property type="evidence" value="ECO:0007669"/>
    <property type="project" value="InterPro"/>
</dbReference>
<dbReference type="GO" id="GO:0005506">
    <property type="term" value="F:iron ion binding"/>
    <property type="evidence" value="ECO:0007669"/>
    <property type="project" value="InterPro"/>
</dbReference>
<dbReference type="GO" id="GO:0015979">
    <property type="term" value="P:photosynthesis"/>
    <property type="evidence" value="ECO:0007669"/>
    <property type="project" value="UniProtKB-UniRule"/>
</dbReference>
<dbReference type="FunFam" id="2.60.40.830:FF:000001">
    <property type="entry name" value="Cytochrome f"/>
    <property type="match status" value="1"/>
</dbReference>
<dbReference type="Gene3D" id="2.40.50.100">
    <property type="match status" value="1"/>
</dbReference>
<dbReference type="Gene3D" id="2.60.40.830">
    <property type="entry name" value="Cytochrome f large domain"/>
    <property type="match status" value="1"/>
</dbReference>
<dbReference type="Gene3D" id="1.20.5.700">
    <property type="entry name" value="Single helix bin"/>
    <property type="match status" value="1"/>
</dbReference>
<dbReference type="HAMAP" id="MF_00610">
    <property type="entry name" value="Cytb6_f_cytF"/>
    <property type="match status" value="1"/>
</dbReference>
<dbReference type="InterPro" id="IPR024058">
    <property type="entry name" value="Cyt-f_TM"/>
</dbReference>
<dbReference type="InterPro" id="IPR002325">
    <property type="entry name" value="Cyt_f"/>
</dbReference>
<dbReference type="InterPro" id="IPR024094">
    <property type="entry name" value="Cyt_f_lg_dom"/>
</dbReference>
<dbReference type="InterPro" id="IPR036826">
    <property type="entry name" value="Cyt_f_lg_dom_sf"/>
</dbReference>
<dbReference type="InterPro" id="IPR011054">
    <property type="entry name" value="Rudment_hybrid_motif"/>
</dbReference>
<dbReference type="NCBIfam" id="NF002736">
    <property type="entry name" value="PRK02693.1"/>
    <property type="match status" value="1"/>
</dbReference>
<dbReference type="PANTHER" id="PTHR33288">
    <property type="match status" value="1"/>
</dbReference>
<dbReference type="PANTHER" id="PTHR33288:SF10">
    <property type="entry name" value="CYTOCHROME F"/>
    <property type="match status" value="1"/>
</dbReference>
<dbReference type="Pfam" id="PF01333">
    <property type="entry name" value="Apocytochr_F_C"/>
    <property type="match status" value="1"/>
</dbReference>
<dbReference type="Pfam" id="PF16639">
    <property type="entry name" value="Apocytochr_F_N"/>
    <property type="match status" value="1"/>
</dbReference>
<dbReference type="PRINTS" id="PR00610">
    <property type="entry name" value="CYTOCHROMEF"/>
</dbReference>
<dbReference type="SUPFAM" id="SSF103431">
    <property type="entry name" value="Cytochrome f subunit of the cytochrome b6f complex, transmembrane anchor"/>
    <property type="match status" value="1"/>
</dbReference>
<dbReference type="SUPFAM" id="SSF49441">
    <property type="entry name" value="Cytochrome f, large domain"/>
    <property type="match status" value="1"/>
</dbReference>
<dbReference type="SUPFAM" id="SSF51246">
    <property type="entry name" value="Rudiment single hybrid motif"/>
    <property type="match status" value="1"/>
</dbReference>
<dbReference type="PROSITE" id="PS51010">
    <property type="entry name" value="CYTF"/>
    <property type="match status" value="1"/>
</dbReference>
<keyword id="KW-0249">Electron transport</keyword>
<keyword id="KW-0349">Heme</keyword>
<keyword id="KW-0408">Iron</keyword>
<keyword id="KW-0472">Membrane</keyword>
<keyword id="KW-0479">Metal-binding</keyword>
<keyword id="KW-0602">Photosynthesis</keyword>
<keyword id="KW-1185">Reference proteome</keyword>
<keyword id="KW-0732">Signal</keyword>
<keyword id="KW-0793">Thylakoid</keyword>
<keyword id="KW-0812">Transmembrane</keyword>
<keyword id="KW-1133">Transmembrane helix</keyword>
<keyword id="KW-0813">Transport</keyword>
<organism>
    <name type="scientific">Synechococcus elongatus (strain ATCC 33912 / PCC 7942 / FACHB-805)</name>
    <name type="common">Anacystis nidulans R2</name>
    <dbReference type="NCBI Taxonomy" id="1140"/>
    <lineage>
        <taxon>Bacteria</taxon>
        <taxon>Bacillati</taxon>
        <taxon>Cyanobacteriota</taxon>
        <taxon>Cyanophyceae</taxon>
        <taxon>Synechococcales</taxon>
        <taxon>Synechococcaceae</taxon>
        <taxon>Synechococcus</taxon>
    </lineage>
</organism>